<sequence length="119" mass="13351">MDKIVLEGCRFYGYHGAFKEEQTLGQIFLVDLELSVDLQAASLSDQLTDTVHYGIVFDSVRQLVEGGKFILIERLAGAICEQLFNEFPPIEAIKVAIKKENPPIAGHYKAVGIELERQR</sequence>
<proteinExistence type="inferred from homology"/>
<gene>
    <name type="primary">folB</name>
    <name type="synonym">folQ</name>
    <name type="ordered locus">SpyM3_0761</name>
</gene>
<comment type="function">
    <text evidence="1">Catalyzes the conversion of 7,8-dihydroneopterin to 6-hydroxymethyl-7,8-dihydropterin.</text>
</comment>
<comment type="catalytic activity">
    <reaction evidence="1">
        <text>7,8-dihydroneopterin = 6-hydroxymethyl-7,8-dihydropterin + glycolaldehyde</text>
        <dbReference type="Rhea" id="RHEA:10540"/>
        <dbReference type="ChEBI" id="CHEBI:17001"/>
        <dbReference type="ChEBI" id="CHEBI:17071"/>
        <dbReference type="ChEBI" id="CHEBI:44841"/>
        <dbReference type="EC" id="4.1.2.25"/>
    </reaction>
</comment>
<comment type="pathway">
    <text>Cofactor biosynthesis; tetrahydrofolate biosynthesis; 2-amino-4-hydroxy-6-hydroxymethyl-7,8-dihydropteridine diphosphate from 7,8-dihydroneopterin triphosphate: step 3/4.</text>
</comment>
<comment type="similarity">
    <text evidence="2">Belongs to the DHNA family.</text>
</comment>
<accession>P0DB12</accession>
<accession>Q8K7K7</accession>
<reference key="1">
    <citation type="journal article" date="2002" name="Proc. Natl. Acad. Sci. U.S.A.">
        <title>Genome sequence of a serotype M3 strain of group A Streptococcus: phage-encoded toxins, the high-virulence phenotype, and clone emergence.</title>
        <authorList>
            <person name="Beres S.B."/>
            <person name="Sylva G.L."/>
            <person name="Barbian K.D."/>
            <person name="Lei B."/>
            <person name="Hoff J.S."/>
            <person name="Mammarella N.D."/>
            <person name="Liu M.-Y."/>
            <person name="Smoot J.C."/>
            <person name="Porcella S.F."/>
            <person name="Parkins L.D."/>
            <person name="Campbell D.S."/>
            <person name="Smith T.M."/>
            <person name="McCormick J.K."/>
            <person name="Leung D.Y.M."/>
            <person name="Schlievert P.M."/>
            <person name="Musser J.M."/>
        </authorList>
    </citation>
    <scope>NUCLEOTIDE SEQUENCE [LARGE SCALE GENOMIC DNA]</scope>
    <source>
        <strain>ATCC BAA-595 / MGAS315</strain>
    </source>
</reference>
<keyword id="KW-0289">Folate biosynthesis</keyword>
<keyword id="KW-0456">Lyase</keyword>
<feature type="chain" id="PRO_0000168290" description="Dihydroneopterin aldolase">
    <location>
        <begin position="1"/>
        <end position="119"/>
    </location>
</feature>
<feature type="active site" description="Proton donor/acceptor" evidence="1">
    <location>
        <position position="99"/>
    </location>
</feature>
<feature type="binding site" evidence="1">
    <location>
        <position position="21"/>
    </location>
    <ligand>
        <name>substrate</name>
    </ligand>
</feature>
<feature type="binding site" evidence="1">
    <location>
        <position position="53"/>
    </location>
    <ligand>
        <name>substrate</name>
    </ligand>
</feature>
<feature type="binding site" evidence="1">
    <location>
        <begin position="72"/>
        <end position="73"/>
    </location>
    <ligand>
        <name>substrate</name>
    </ligand>
</feature>
<evidence type="ECO:0000250" key="1">
    <source>
        <dbReference type="UniProtKB" id="P0AC16"/>
    </source>
</evidence>
<evidence type="ECO:0000305" key="2"/>
<dbReference type="EC" id="4.1.2.25"/>
<dbReference type="EMBL" id="AE014074">
    <property type="protein sequence ID" value="AAM79368.1"/>
    <property type="molecule type" value="Genomic_DNA"/>
</dbReference>
<dbReference type="RefSeq" id="WP_011054469.1">
    <property type="nucleotide sequence ID" value="NC_004070.1"/>
</dbReference>
<dbReference type="SMR" id="P0DB12"/>
<dbReference type="KEGG" id="spg:SpyM3_0761"/>
<dbReference type="HOGENOM" id="CLU_112632_1_3_9"/>
<dbReference type="UniPathway" id="UPA00077">
    <property type="reaction ID" value="UER00154"/>
</dbReference>
<dbReference type="Proteomes" id="UP000000564">
    <property type="component" value="Chromosome"/>
</dbReference>
<dbReference type="GO" id="GO:0005737">
    <property type="term" value="C:cytoplasm"/>
    <property type="evidence" value="ECO:0007669"/>
    <property type="project" value="TreeGrafter"/>
</dbReference>
<dbReference type="GO" id="GO:0004150">
    <property type="term" value="F:dihydroneopterin aldolase activity"/>
    <property type="evidence" value="ECO:0007669"/>
    <property type="project" value="UniProtKB-EC"/>
</dbReference>
<dbReference type="GO" id="GO:0046656">
    <property type="term" value="P:folic acid biosynthetic process"/>
    <property type="evidence" value="ECO:0007669"/>
    <property type="project" value="UniProtKB-KW"/>
</dbReference>
<dbReference type="GO" id="GO:0046654">
    <property type="term" value="P:tetrahydrofolate biosynthetic process"/>
    <property type="evidence" value="ECO:0007669"/>
    <property type="project" value="UniProtKB-UniPathway"/>
</dbReference>
<dbReference type="CDD" id="cd00534">
    <property type="entry name" value="DHNA_DHNTPE"/>
    <property type="match status" value="1"/>
</dbReference>
<dbReference type="FunFam" id="3.30.1130.10:FF:000003">
    <property type="entry name" value="7,8-dihydroneopterin aldolase"/>
    <property type="match status" value="1"/>
</dbReference>
<dbReference type="Gene3D" id="3.30.1130.10">
    <property type="match status" value="1"/>
</dbReference>
<dbReference type="InterPro" id="IPR006156">
    <property type="entry name" value="Dihydroneopterin_aldolase"/>
</dbReference>
<dbReference type="InterPro" id="IPR006157">
    <property type="entry name" value="FolB_dom"/>
</dbReference>
<dbReference type="InterPro" id="IPR043133">
    <property type="entry name" value="GTP-CH-I_C/QueF"/>
</dbReference>
<dbReference type="NCBIfam" id="TIGR00525">
    <property type="entry name" value="folB"/>
    <property type="match status" value="1"/>
</dbReference>
<dbReference type="NCBIfam" id="TIGR00526">
    <property type="entry name" value="folB_dom"/>
    <property type="match status" value="1"/>
</dbReference>
<dbReference type="PANTHER" id="PTHR42844">
    <property type="entry name" value="DIHYDRONEOPTERIN ALDOLASE 1-RELATED"/>
    <property type="match status" value="1"/>
</dbReference>
<dbReference type="PANTHER" id="PTHR42844:SF1">
    <property type="entry name" value="DIHYDRONEOPTERIN ALDOLASE 1-RELATED"/>
    <property type="match status" value="1"/>
</dbReference>
<dbReference type="Pfam" id="PF02152">
    <property type="entry name" value="FolB"/>
    <property type="match status" value="1"/>
</dbReference>
<dbReference type="SMART" id="SM00905">
    <property type="entry name" value="FolB"/>
    <property type="match status" value="1"/>
</dbReference>
<dbReference type="SUPFAM" id="SSF55620">
    <property type="entry name" value="Tetrahydrobiopterin biosynthesis enzymes-like"/>
    <property type="match status" value="1"/>
</dbReference>
<name>FOLB_STRP3</name>
<organism>
    <name type="scientific">Streptococcus pyogenes serotype M3 (strain ATCC BAA-595 / MGAS315)</name>
    <dbReference type="NCBI Taxonomy" id="198466"/>
    <lineage>
        <taxon>Bacteria</taxon>
        <taxon>Bacillati</taxon>
        <taxon>Bacillota</taxon>
        <taxon>Bacilli</taxon>
        <taxon>Lactobacillales</taxon>
        <taxon>Streptococcaceae</taxon>
        <taxon>Streptococcus</taxon>
    </lineage>
</organism>
<protein>
    <recommendedName>
        <fullName>Dihydroneopterin aldolase</fullName>
        <shortName>DHNA</shortName>
        <ecNumber>4.1.2.25</ecNumber>
    </recommendedName>
    <alternativeName>
        <fullName>7,8-dihydroneopterin aldolase</fullName>
    </alternativeName>
</protein>